<gene>
    <name evidence="1" type="primary">prfA</name>
    <name type="ordered locus">HPSH_00375</name>
</gene>
<name>RF1_HELPS</name>
<protein>
    <recommendedName>
        <fullName evidence="1">Peptide chain release factor 1</fullName>
        <shortName evidence="1">RF-1</shortName>
    </recommendedName>
</protein>
<organism>
    <name type="scientific">Helicobacter pylori (strain Shi470)</name>
    <dbReference type="NCBI Taxonomy" id="512562"/>
    <lineage>
        <taxon>Bacteria</taxon>
        <taxon>Pseudomonadati</taxon>
        <taxon>Campylobacterota</taxon>
        <taxon>Epsilonproteobacteria</taxon>
        <taxon>Campylobacterales</taxon>
        <taxon>Helicobacteraceae</taxon>
        <taxon>Helicobacter</taxon>
    </lineage>
</organism>
<sequence length="352" mass="39577">MSILAEKLSSILKRYDELTALLSSAEVISDIKKLTELSKEQSSIEEISVASKEYLSVLENIKENKELLEDKELSELAKEELKILEIKKSDLETAIKQLLIPKDPNDDKNIYLELRAGTGGDEAGIFVGDLFKAYCRYADLKKWKVEIVSSSENSVGGYKEIIALIKGKGVYSRLKFEAGTHRVQRVPETESQGRIHTSAITVAIMPEVDDVEVSINSSDLKIEVFRAGGHGGQCVNTTDSAVRITHLPTNISVSMQDEKSQHKNKDKALKILKARLYEKQIEEQQLANAKDRKEQVGSGDRSERIRTYNYPQNRLSEHRINLTLYSLEEIMLSGNLDEVINPLIAHAQSQFE</sequence>
<accession>B2URQ8</accession>
<evidence type="ECO:0000255" key="1">
    <source>
        <dbReference type="HAMAP-Rule" id="MF_00093"/>
    </source>
</evidence>
<evidence type="ECO:0000256" key="2">
    <source>
        <dbReference type="SAM" id="MobiDB-lite"/>
    </source>
</evidence>
<comment type="function">
    <text evidence="1">Peptide chain release factor 1 directs the termination of translation in response to the peptide chain termination codons UAG and UAA.</text>
</comment>
<comment type="subcellular location">
    <subcellularLocation>
        <location evidence="1">Cytoplasm</location>
    </subcellularLocation>
</comment>
<comment type="PTM">
    <text evidence="1">Methylated by PrmC. Methylation increases the termination efficiency of RF1.</text>
</comment>
<comment type="similarity">
    <text evidence="1">Belongs to the prokaryotic/mitochondrial release factor family.</text>
</comment>
<proteinExistence type="inferred from homology"/>
<dbReference type="EMBL" id="CP001072">
    <property type="protein sequence ID" value="ACD47540.1"/>
    <property type="molecule type" value="Genomic_DNA"/>
</dbReference>
<dbReference type="RefSeq" id="WP_000025123.1">
    <property type="nucleotide sequence ID" value="NC_010698.2"/>
</dbReference>
<dbReference type="SMR" id="B2URQ8"/>
<dbReference type="KEGG" id="hps:HPSH_00375"/>
<dbReference type="HOGENOM" id="CLU_036856_0_1_7"/>
<dbReference type="GO" id="GO:0005737">
    <property type="term" value="C:cytoplasm"/>
    <property type="evidence" value="ECO:0007669"/>
    <property type="project" value="UniProtKB-SubCell"/>
</dbReference>
<dbReference type="GO" id="GO:0016149">
    <property type="term" value="F:translation release factor activity, codon specific"/>
    <property type="evidence" value="ECO:0007669"/>
    <property type="project" value="UniProtKB-UniRule"/>
</dbReference>
<dbReference type="FunFam" id="3.30.160.20:FF:000004">
    <property type="entry name" value="Peptide chain release factor 1"/>
    <property type="match status" value="1"/>
</dbReference>
<dbReference type="FunFam" id="3.30.70.1660:FF:000002">
    <property type="entry name" value="Peptide chain release factor 1"/>
    <property type="match status" value="1"/>
</dbReference>
<dbReference type="FunFam" id="3.30.70.1660:FF:000004">
    <property type="entry name" value="Peptide chain release factor 1"/>
    <property type="match status" value="1"/>
</dbReference>
<dbReference type="Gene3D" id="3.30.160.20">
    <property type="match status" value="1"/>
</dbReference>
<dbReference type="Gene3D" id="3.30.70.1660">
    <property type="match status" value="2"/>
</dbReference>
<dbReference type="Gene3D" id="6.10.140.1950">
    <property type="match status" value="1"/>
</dbReference>
<dbReference type="HAMAP" id="MF_00093">
    <property type="entry name" value="Rel_fac_1"/>
    <property type="match status" value="1"/>
</dbReference>
<dbReference type="InterPro" id="IPR005139">
    <property type="entry name" value="PCRF"/>
</dbReference>
<dbReference type="InterPro" id="IPR000352">
    <property type="entry name" value="Pep_chain_release_fac_I"/>
</dbReference>
<dbReference type="InterPro" id="IPR045853">
    <property type="entry name" value="Pep_chain_release_fac_I_sf"/>
</dbReference>
<dbReference type="InterPro" id="IPR050057">
    <property type="entry name" value="Prokaryotic/Mito_RF"/>
</dbReference>
<dbReference type="InterPro" id="IPR004373">
    <property type="entry name" value="RF-1"/>
</dbReference>
<dbReference type="NCBIfam" id="TIGR00019">
    <property type="entry name" value="prfA"/>
    <property type="match status" value="1"/>
</dbReference>
<dbReference type="NCBIfam" id="NF001859">
    <property type="entry name" value="PRK00591.1"/>
    <property type="match status" value="1"/>
</dbReference>
<dbReference type="PANTHER" id="PTHR43804">
    <property type="entry name" value="LD18447P"/>
    <property type="match status" value="1"/>
</dbReference>
<dbReference type="PANTHER" id="PTHR43804:SF7">
    <property type="entry name" value="LD18447P"/>
    <property type="match status" value="1"/>
</dbReference>
<dbReference type="Pfam" id="PF03462">
    <property type="entry name" value="PCRF"/>
    <property type="match status" value="1"/>
</dbReference>
<dbReference type="Pfam" id="PF00472">
    <property type="entry name" value="RF-1"/>
    <property type="match status" value="1"/>
</dbReference>
<dbReference type="SMART" id="SM00937">
    <property type="entry name" value="PCRF"/>
    <property type="match status" value="1"/>
</dbReference>
<dbReference type="SUPFAM" id="SSF75620">
    <property type="entry name" value="Release factor"/>
    <property type="match status" value="1"/>
</dbReference>
<dbReference type="PROSITE" id="PS00745">
    <property type="entry name" value="RF_PROK_I"/>
    <property type="match status" value="1"/>
</dbReference>
<keyword id="KW-0963">Cytoplasm</keyword>
<keyword id="KW-0488">Methylation</keyword>
<keyword id="KW-0648">Protein biosynthesis</keyword>
<feature type="chain" id="PRO_1000093463" description="Peptide chain release factor 1">
    <location>
        <begin position="1"/>
        <end position="352"/>
    </location>
</feature>
<feature type="region of interest" description="Disordered" evidence="2">
    <location>
        <begin position="288"/>
        <end position="309"/>
    </location>
</feature>
<feature type="compositionally biased region" description="Basic and acidic residues" evidence="2">
    <location>
        <begin position="289"/>
        <end position="306"/>
    </location>
</feature>
<feature type="modified residue" description="N5-methylglutamine" evidence="1">
    <location>
        <position position="233"/>
    </location>
</feature>
<reference key="1">
    <citation type="submission" date="2008-05" db="EMBL/GenBank/DDBJ databases">
        <title>Genome sequence of Helicobacter pylori from the remote Amazon: traces of Asian ancestry of the first Americans.</title>
        <authorList>
            <person name="Kersulyte D."/>
            <person name="Kalia A."/>
            <person name="Gilman R.H."/>
            <person name="Berg D.E."/>
        </authorList>
    </citation>
    <scope>NUCLEOTIDE SEQUENCE [LARGE SCALE GENOMIC DNA]</scope>
    <source>
        <strain>Shi470</strain>
    </source>
</reference>